<reference key="1">
    <citation type="submission" date="2007-03" db="EMBL/GenBank/DDBJ databases">
        <title>The NIAID influenza genome sequencing project.</title>
        <authorList>
            <person name="Ghedin E."/>
            <person name="Spiro D."/>
            <person name="Miller N."/>
            <person name="Zaborsky J."/>
            <person name="Feldblyum T."/>
            <person name="Subbu V."/>
            <person name="Shumway M."/>
            <person name="Sparenborg J."/>
            <person name="Groveman L."/>
            <person name="Halpin R."/>
            <person name="Sitz J."/>
            <person name="Koo H."/>
            <person name="Salzberg S.L."/>
            <person name="Webster R.G."/>
            <person name="Hoffmann E."/>
            <person name="Krauss S."/>
            <person name="Naeve C."/>
            <person name="Bao Y."/>
            <person name="Bolotov P."/>
            <person name="Dernovoy D."/>
            <person name="Kiryutin B."/>
            <person name="Lipman D.J."/>
            <person name="Tatusova T."/>
        </authorList>
    </citation>
    <scope>NUCLEOTIDE SEQUENCE [GENOMIC RNA]</scope>
</reference>
<reference key="2">
    <citation type="submission" date="2007-03" db="EMBL/GenBank/DDBJ databases">
        <authorList>
            <consortium name="The NIAID Influenza Genome Sequencing Consortium"/>
        </authorList>
    </citation>
    <scope>NUCLEOTIDE SEQUENCE [GENOMIC RNA]</scope>
</reference>
<sequence>MERIKELRNLMSQSRTREILTKTTVDHMAIIKKYTSGRQEKNPSLRMKWMMAMKYPITADKRITEMIPERNEQGQTLWSKMNDAGSDRVMVSPLAVTWWNRNGPMTSTVHYPKIYKTYFEKVERLKHGTFGPVHFRNQVKIRRRVDINPGHADLSAKEAQDVIMEVVFPNEVGARILTSESQLTITKEKKEELQDCKISPLMVAYMLERELVRKTRFLPVAGGTSSVYIEVLHLTQGTCWEQMYTPGGEVRNDDVDQSLIIAARNIVRRAAVSADPLASLLEMCHSTQIGGTRMVDILRQNPTEEQAVDICKAAMGLRISSSFSFGGFTFKRTSGSSVKREEEVLTGNLQTLKIRVHEGYEEFTMVGRRATAILRKATRRLIQLIVSGKDEQSIAEAIIVAMVFSQEDCMIKAVRGDLNFVNRANQRLNPMHQLLRHFQKDAKVLFQNWGIEPIDNVMGMIGILPDMTPSTEVSMRGVRVSKMGVDEYSNAERVVVSIDRFLRVRDQRGNVLLSPEEVSETQGTEKLTITYSSSMMWEINGPESVLVNTYQWIIRNWETVKIQWSQNPTMLYNKMEFEPFQSLVPKAIRGQYSGFVRTLFQQMRDVLGTFDTTQIIKLLPFAAAPPKQSRMQFSSLTVNVRGSGMRILVRGNSPVFNYNKATKRLTVLGKDAGTLTEDPDEGTSGVESAVLRGFLILGKEDRRYGPALSINELSNLAKGEKANVLIGQGDVVLVMKRKRDSSILTDSQTATKRIRMAIN</sequence>
<name>PB2_I43A0</name>
<gene>
    <name evidence="1" type="primary">PB2</name>
</gene>
<organism>
    <name type="scientific">Influenza A virus (strain A/USA:Iowa/1943 H1N1)</name>
    <dbReference type="NCBI Taxonomy" id="425563"/>
    <lineage>
        <taxon>Viruses</taxon>
        <taxon>Riboviria</taxon>
        <taxon>Orthornavirae</taxon>
        <taxon>Negarnaviricota</taxon>
        <taxon>Polyploviricotina</taxon>
        <taxon>Insthoviricetes</taxon>
        <taxon>Articulavirales</taxon>
        <taxon>Orthomyxoviridae</taxon>
        <taxon>Alphainfluenzavirus</taxon>
        <taxon>Alphainfluenzavirus influenzae</taxon>
        <taxon>Influenza A virus</taxon>
    </lineage>
</organism>
<evidence type="ECO:0000255" key="1">
    <source>
        <dbReference type="HAMAP-Rule" id="MF_04062"/>
    </source>
</evidence>
<feature type="chain" id="PRO_0000373033" description="Polymerase basic protein 2">
    <location>
        <begin position="1"/>
        <end position="759"/>
    </location>
</feature>
<feature type="short sequence motif" description="Nuclear localization signal" evidence="1">
    <location>
        <begin position="736"/>
        <end position="739"/>
    </location>
</feature>
<feature type="site" description="Mammalian adaptation" evidence="1">
    <location>
        <position position="627"/>
    </location>
</feature>
<dbReference type="EMBL" id="CY020468">
    <property type="protein sequence ID" value="ABO38383.1"/>
    <property type="molecule type" value="Viral_cRNA"/>
</dbReference>
<dbReference type="BMRB" id="A4GCL8"/>
<dbReference type="SMR" id="A4GCL8"/>
<dbReference type="PRO" id="PR:A4GCL8"/>
<dbReference type="Proteomes" id="UP000008432">
    <property type="component" value="Genome"/>
</dbReference>
<dbReference type="GO" id="GO:0033650">
    <property type="term" value="C:host cell mitochondrion"/>
    <property type="evidence" value="ECO:0007669"/>
    <property type="project" value="UniProtKB-SubCell"/>
</dbReference>
<dbReference type="GO" id="GO:0042025">
    <property type="term" value="C:host cell nucleus"/>
    <property type="evidence" value="ECO:0007669"/>
    <property type="project" value="UniProtKB-SubCell"/>
</dbReference>
<dbReference type="GO" id="GO:0044423">
    <property type="term" value="C:virion component"/>
    <property type="evidence" value="ECO:0007669"/>
    <property type="project" value="UniProtKB-UniRule"/>
</dbReference>
<dbReference type="GO" id="GO:0003723">
    <property type="term" value="F:RNA binding"/>
    <property type="evidence" value="ECO:0007669"/>
    <property type="project" value="UniProtKB-UniRule"/>
</dbReference>
<dbReference type="GO" id="GO:0003968">
    <property type="term" value="F:RNA-directed RNA polymerase activity"/>
    <property type="evidence" value="ECO:0007669"/>
    <property type="project" value="UniProtKB-UniRule"/>
</dbReference>
<dbReference type="GO" id="GO:0006370">
    <property type="term" value="P:7-methylguanosine mRNA capping"/>
    <property type="evidence" value="ECO:0007669"/>
    <property type="project" value="UniProtKB-UniRule"/>
</dbReference>
<dbReference type="GO" id="GO:0075526">
    <property type="term" value="P:cap snatching"/>
    <property type="evidence" value="ECO:0007669"/>
    <property type="project" value="UniProtKB-UniRule"/>
</dbReference>
<dbReference type="GO" id="GO:0006351">
    <property type="term" value="P:DNA-templated transcription"/>
    <property type="evidence" value="ECO:0007669"/>
    <property type="project" value="UniProtKB-UniRule"/>
</dbReference>
<dbReference type="GO" id="GO:0039545">
    <property type="term" value="P:symbiont-mediated suppression of host cytoplasmic pattern recognition receptor signaling pathway via inhibition of MAVS activity"/>
    <property type="evidence" value="ECO:0007669"/>
    <property type="project" value="UniProtKB-UniRule"/>
</dbReference>
<dbReference type="GO" id="GO:0039657">
    <property type="term" value="P:symbiont-mediated suppression of host gene expression"/>
    <property type="evidence" value="ECO:0007669"/>
    <property type="project" value="UniProtKB-KW"/>
</dbReference>
<dbReference type="GO" id="GO:0039523">
    <property type="term" value="P:symbiont-mediated suppression of host mRNA transcription via inhibition of RNA polymerase II activity"/>
    <property type="evidence" value="ECO:0007669"/>
    <property type="project" value="UniProtKB-UniRule"/>
</dbReference>
<dbReference type="GO" id="GO:0039694">
    <property type="term" value="P:viral RNA genome replication"/>
    <property type="evidence" value="ECO:0007669"/>
    <property type="project" value="InterPro"/>
</dbReference>
<dbReference type="FunFam" id="3.30.30.90:FF:000001">
    <property type="entry name" value="Polymerase basic protein 2"/>
    <property type="match status" value="1"/>
</dbReference>
<dbReference type="Gene3D" id="3.30.30.90">
    <property type="entry name" value="Polymerase Basic Protein 2, C-terminal domain"/>
    <property type="match status" value="1"/>
</dbReference>
<dbReference type="HAMAP" id="MF_04062">
    <property type="entry name" value="INV_PB2"/>
    <property type="match status" value="1"/>
</dbReference>
<dbReference type="InterPro" id="IPR049110">
    <property type="entry name" value="Flu_PB2_2nd"/>
</dbReference>
<dbReference type="InterPro" id="IPR049114">
    <property type="entry name" value="Flu_PB2_6th"/>
</dbReference>
<dbReference type="InterPro" id="IPR049115">
    <property type="entry name" value="Flu_PB2_C"/>
</dbReference>
<dbReference type="InterPro" id="IPR048298">
    <property type="entry name" value="Flu_PB2_CAP-bd"/>
</dbReference>
<dbReference type="InterPro" id="IPR049111">
    <property type="entry name" value="Flu_PB2_middle"/>
</dbReference>
<dbReference type="InterPro" id="IPR049106">
    <property type="entry name" value="Flu_PB2_N"/>
</dbReference>
<dbReference type="InterPro" id="IPR001591">
    <property type="entry name" value="INV_PB2"/>
</dbReference>
<dbReference type="InterPro" id="IPR049113">
    <property type="entry name" value="PB2_helical"/>
</dbReference>
<dbReference type="InterPro" id="IPR037258">
    <property type="entry name" value="PDB2_C"/>
</dbReference>
<dbReference type="Pfam" id="PF20947">
    <property type="entry name" value="Flu_PB2_1st"/>
    <property type="match status" value="1"/>
</dbReference>
<dbReference type="Pfam" id="PF20948">
    <property type="entry name" value="Flu_PB2_2nd"/>
    <property type="match status" value="1"/>
</dbReference>
<dbReference type="Pfam" id="PF20949">
    <property type="entry name" value="Flu_PB2_3rd"/>
    <property type="match status" value="1"/>
</dbReference>
<dbReference type="Pfam" id="PF20950">
    <property type="entry name" value="Flu_PB2_4th"/>
    <property type="match status" value="1"/>
</dbReference>
<dbReference type="Pfam" id="PF00604">
    <property type="entry name" value="Flu_PB2_5th"/>
    <property type="match status" value="1"/>
</dbReference>
<dbReference type="Pfam" id="PF20951">
    <property type="entry name" value="Flu_PB2_6th"/>
    <property type="match status" value="1"/>
</dbReference>
<dbReference type="Pfam" id="PF20952">
    <property type="entry name" value="Flu_PB2_7th"/>
    <property type="match status" value="1"/>
</dbReference>
<dbReference type="SUPFAM" id="SSF160453">
    <property type="entry name" value="PB2 C-terminal domain-like"/>
    <property type="match status" value="1"/>
</dbReference>
<comment type="function">
    <text evidence="1">Plays an essential role in transcription initiation and cap-stealing mechanism, in which cellular capped pre-mRNAs are used to generate primers for viral transcription. Recognizes and binds the 7-methylguanosine-containing cap of the target pre-RNA which is subsequently cleaved after 10-13 nucleotides by the viral protein PA. Plays a role in the initiation of the viral genome replication and modulates the activity of the ribonucleoprotein (RNP) complex. In addition, participates in the inhibition of type I interferon induction through interaction with and inhibition of the host mitochondrial antiviral signaling protein MAVS.</text>
</comment>
<comment type="subunit">
    <text evidence="1">Influenza RNA polymerase is composed of three subunits: PB1, PB2 and PA. Interacts (via N-terminus) with PB1 (via C-terminus). Interacts with nucleoprotein NP (via N-terminus). Interacts (via N-terminus) with host MAVS (via N-terminus); this interaction inhibits host innate immune response.</text>
</comment>
<comment type="subcellular location">
    <subcellularLocation>
        <location evidence="1">Virion</location>
    </subcellularLocation>
    <subcellularLocation>
        <location evidence="1">Host nucleus</location>
    </subcellularLocation>
    <subcellularLocation>
        <location evidence="1">Host mitochondrion</location>
    </subcellularLocation>
</comment>
<comment type="similarity">
    <text evidence="1">Belongs to the influenza viruses PB2 family.</text>
</comment>
<accession>A4GCL8</accession>
<keyword id="KW-1157">Cap snatching</keyword>
<keyword id="KW-1262">Eukaryotic host gene expression shutoff by virus</keyword>
<keyword id="KW-1191">Eukaryotic host transcription shutoff by virus</keyword>
<keyword id="KW-1190">Host gene expression shutoff by virus</keyword>
<keyword id="KW-1045">Host mitochondrion</keyword>
<keyword id="KW-1048">Host nucleus</keyword>
<keyword id="KW-0945">Host-virus interaction</keyword>
<keyword id="KW-1090">Inhibition of host innate immune response by virus</keyword>
<keyword id="KW-1097">Inhibition of host MAVS by virus</keyword>
<keyword id="KW-1113">Inhibition of host RLR pathway by virus</keyword>
<keyword id="KW-1104">Inhibition of host RNA polymerase II by virus</keyword>
<keyword id="KW-0506">mRNA capping</keyword>
<keyword id="KW-0507">mRNA processing</keyword>
<keyword id="KW-0899">Viral immunoevasion</keyword>
<keyword id="KW-1195">Viral transcription</keyword>
<keyword id="KW-0946">Virion</keyword>
<protein>
    <recommendedName>
        <fullName evidence="1">Polymerase basic protein 2</fullName>
    </recommendedName>
    <alternativeName>
        <fullName evidence="1">RNA-directed RNA polymerase subunit P3</fullName>
    </alternativeName>
</protein>
<organismHost>
    <name type="scientific">Aves</name>
    <dbReference type="NCBI Taxonomy" id="8782"/>
</organismHost>
<organismHost>
    <name type="scientific">Homo sapiens</name>
    <name type="common">Human</name>
    <dbReference type="NCBI Taxonomy" id="9606"/>
</organismHost>
<organismHost>
    <name type="scientific">Sus scrofa</name>
    <name type="common">Pig</name>
    <dbReference type="NCBI Taxonomy" id="9823"/>
</organismHost>
<proteinExistence type="inferred from homology"/>